<organism>
    <name type="scientific">Pseudomonas fluorescens (strain ATCC BAA-477 / NRRL B-23932 / Pf-5)</name>
    <dbReference type="NCBI Taxonomy" id="220664"/>
    <lineage>
        <taxon>Bacteria</taxon>
        <taxon>Pseudomonadati</taxon>
        <taxon>Pseudomonadota</taxon>
        <taxon>Gammaproteobacteria</taxon>
        <taxon>Pseudomonadales</taxon>
        <taxon>Pseudomonadaceae</taxon>
        <taxon>Pseudomonas</taxon>
    </lineage>
</organism>
<proteinExistence type="inferred from homology"/>
<sequence length="295" mass="32527">MMRILLFLATNLAVVLIASITLSLFGFNGFMAANGVDLNLNQLLIFCAVFGFAGSLFSLFISKWMAKMSTSTQIITQPRTRHEQWLLHTVEQLSREAGIKMPEVGIFPAYEANAFATGWNKNDALVAVSQGLLERFSPDEVKAVLAHEIGHVANGDMVTLALIQGVVNTFVMFFARIIGNFVDKVIFKNEEGQGIAYYVATIFAELVLGILASAIVMWFSRKREYRADEAGARLAGTNAMIGALQRLRSEQGLPVHMPDTLNAFGINGGIKQGLARMFMSHPPLEERIEALRRRG</sequence>
<accession>Q4K8U3</accession>
<keyword id="KW-0997">Cell inner membrane</keyword>
<keyword id="KW-1003">Cell membrane</keyword>
<keyword id="KW-0378">Hydrolase</keyword>
<keyword id="KW-0472">Membrane</keyword>
<keyword id="KW-0479">Metal-binding</keyword>
<keyword id="KW-0482">Metalloprotease</keyword>
<keyword id="KW-0645">Protease</keyword>
<keyword id="KW-0346">Stress response</keyword>
<keyword id="KW-0812">Transmembrane</keyword>
<keyword id="KW-1133">Transmembrane helix</keyword>
<keyword id="KW-0862">Zinc</keyword>
<name>HTPX_PSEF5</name>
<comment type="cofactor">
    <cofactor evidence="1">
        <name>Zn(2+)</name>
        <dbReference type="ChEBI" id="CHEBI:29105"/>
    </cofactor>
    <text evidence="1">Binds 1 zinc ion per subunit.</text>
</comment>
<comment type="subcellular location">
    <subcellularLocation>
        <location evidence="1">Cell inner membrane</location>
        <topology evidence="1">Multi-pass membrane protein</topology>
    </subcellularLocation>
</comment>
<comment type="similarity">
    <text evidence="1">Belongs to the peptidase M48B family.</text>
</comment>
<gene>
    <name evidence="1" type="primary">htpX</name>
    <name type="ordered locus">PFL_4248</name>
</gene>
<feature type="chain" id="PRO_1000020915" description="Protease HtpX">
    <location>
        <begin position="1"/>
        <end position="295"/>
    </location>
</feature>
<feature type="transmembrane region" description="Helical" evidence="1">
    <location>
        <begin position="4"/>
        <end position="24"/>
    </location>
</feature>
<feature type="transmembrane region" description="Helical" evidence="1">
    <location>
        <begin position="42"/>
        <end position="62"/>
    </location>
</feature>
<feature type="transmembrane region" description="Helical" evidence="1">
    <location>
        <begin position="158"/>
        <end position="178"/>
    </location>
</feature>
<feature type="transmembrane region" description="Helical" evidence="1">
    <location>
        <begin position="199"/>
        <end position="219"/>
    </location>
</feature>
<feature type="active site" evidence="1">
    <location>
        <position position="148"/>
    </location>
</feature>
<feature type="binding site" evidence="1">
    <location>
        <position position="147"/>
    </location>
    <ligand>
        <name>Zn(2+)</name>
        <dbReference type="ChEBI" id="CHEBI:29105"/>
        <note>catalytic</note>
    </ligand>
</feature>
<feature type="binding site" evidence="1">
    <location>
        <position position="151"/>
    </location>
    <ligand>
        <name>Zn(2+)</name>
        <dbReference type="ChEBI" id="CHEBI:29105"/>
        <note>catalytic</note>
    </ligand>
</feature>
<feature type="binding site" evidence="1">
    <location>
        <position position="224"/>
    </location>
    <ligand>
        <name>Zn(2+)</name>
        <dbReference type="ChEBI" id="CHEBI:29105"/>
        <note>catalytic</note>
    </ligand>
</feature>
<protein>
    <recommendedName>
        <fullName evidence="1">Protease HtpX</fullName>
        <ecNumber evidence="1">3.4.24.-</ecNumber>
    </recommendedName>
    <alternativeName>
        <fullName evidence="1">Heat shock protein HtpX</fullName>
    </alternativeName>
</protein>
<reference key="1">
    <citation type="journal article" date="2005" name="Nat. Biotechnol.">
        <title>Complete genome sequence of the plant commensal Pseudomonas fluorescens Pf-5.</title>
        <authorList>
            <person name="Paulsen I.T."/>
            <person name="Press C.M."/>
            <person name="Ravel J."/>
            <person name="Kobayashi D.Y."/>
            <person name="Myers G.S.A."/>
            <person name="Mavrodi D.V."/>
            <person name="DeBoy R.T."/>
            <person name="Seshadri R."/>
            <person name="Ren Q."/>
            <person name="Madupu R."/>
            <person name="Dodson R.J."/>
            <person name="Durkin A.S."/>
            <person name="Brinkac L.M."/>
            <person name="Daugherty S.C."/>
            <person name="Sullivan S.A."/>
            <person name="Rosovitz M.J."/>
            <person name="Gwinn M.L."/>
            <person name="Zhou L."/>
            <person name="Schneider D.J."/>
            <person name="Cartinhour S.W."/>
            <person name="Nelson W.C."/>
            <person name="Weidman J."/>
            <person name="Watkins K."/>
            <person name="Tran K."/>
            <person name="Khouri H."/>
            <person name="Pierson E.A."/>
            <person name="Pierson L.S. III"/>
            <person name="Thomashow L.S."/>
            <person name="Loper J.E."/>
        </authorList>
    </citation>
    <scope>NUCLEOTIDE SEQUENCE [LARGE SCALE GENOMIC DNA]</scope>
    <source>
        <strain>ATCC BAA-477 / NRRL B-23932 / Pf-5</strain>
    </source>
</reference>
<dbReference type="EC" id="3.4.24.-" evidence="1"/>
<dbReference type="EMBL" id="CP000076">
    <property type="protein sequence ID" value="AAY93504.1"/>
    <property type="molecule type" value="Genomic_DNA"/>
</dbReference>
<dbReference type="RefSeq" id="WP_011062522.1">
    <property type="nucleotide sequence ID" value="NC_004129.6"/>
</dbReference>
<dbReference type="SMR" id="Q4K8U3"/>
<dbReference type="STRING" id="220664.PFL_4248"/>
<dbReference type="MEROPS" id="M48.002"/>
<dbReference type="DNASU" id="3477374"/>
<dbReference type="KEGG" id="pfl:PFL_4248"/>
<dbReference type="PATRIC" id="fig|220664.5.peg.4347"/>
<dbReference type="eggNOG" id="COG0501">
    <property type="taxonomic scope" value="Bacteria"/>
</dbReference>
<dbReference type="HOGENOM" id="CLU_042266_1_0_6"/>
<dbReference type="Proteomes" id="UP000008540">
    <property type="component" value="Chromosome"/>
</dbReference>
<dbReference type="GO" id="GO:0005886">
    <property type="term" value="C:plasma membrane"/>
    <property type="evidence" value="ECO:0007669"/>
    <property type="project" value="UniProtKB-SubCell"/>
</dbReference>
<dbReference type="GO" id="GO:0004222">
    <property type="term" value="F:metalloendopeptidase activity"/>
    <property type="evidence" value="ECO:0007669"/>
    <property type="project" value="UniProtKB-UniRule"/>
</dbReference>
<dbReference type="GO" id="GO:0008270">
    <property type="term" value="F:zinc ion binding"/>
    <property type="evidence" value="ECO:0007669"/>
    <property type="project" value="UniProtKB-UniRule"/>
</dbReference>
<dbReference type="GO" id="GO:0006508">
    <property type="term" value="P:proteolysis"/>
    <property type="evidence" value="ECO:0007669"/>
    <property type="project" value="UniProtKB-KW"/>
</dbReference>
<dbReference type="CDD" id="cd07335">
    <property type="entry name" value="M48B_HtpX_like"/>
    <property type="match status" value="1"/>
</dbReference>
<dbReference type="Gene3D" id="3.30.2010.10">
    <property type="entry name" value="Metalloproteases ('zincins'), catalytic domain"/>
    <property type="match status" value="1"/>
</dbReference>
<dbReference type="HAMAP" id="MF_00188">
    <property type="entry name" value="Pept_M48_protease_HtpX"/>
    <property type="match status" value="1"/>
</dbReference>
<dbReference type="InterPro" id="IPR050083">
    <property type="entry name" value="HtpX_protease"/>
</dbReference>
<dbReference type="InterPro" id="IPR022919">
    <property type="entry name" value="Pept_M48_protease_HtpX"/>
</dbReference>
<dbReference type="InterPro" id="IPR001915">
    <property type="entry name" value="Peptidase_M48"/>
</dbReference>
<dbReference type="NCBIfam" id="NF003965">
    <property type="entry name" value="PRK05457.1"/>
    <property type="match status" value="1"/>
</dbReference>
<dbReference type="PANTHER" id="PTHR43221">
    <property type="entry name" value="PROTEASE HTPX"/>
    <property type="match status" value="1"/>
</dbReference>
<dbReference type="PANTHER" id="PTHR43221:SF1">
    <property type="entry name" value="PROTEASE HTPX"/>
    <property type="match status" value="1"/>
</dbReference>
<dbReference type="Pfam" id="PF01435">
    <property type="entry name" value="Peptidase_M48"/>
    <property type="match status" value="1"/>
</dbReference>
<evidence type="ECO:0000255" key="1">
    <source>
        <dbReference type="HAMAP-Rule" id="MF_00188"/>
    </source>
</evidence>